<feature type="chain" id="PRO_0000422354" description="Gibberellin 20 oxidase 5">
    <location>
        <begin position="1"/>
        <end position="385"/>
    </location>
</feature>
<feature type="domain" description="Fe2OG dioxygenase" evidence="4">
    <location>
        <begin position="224"/>
        <end position="324"/>
    </location>
</feature>
<feature type="active site" evidence="3">
    <location>
        <position position="315"/>
    </location>
</feature>
<feature type="binding site" evidence="4">
    <location>
        <position position="249"/>
    </location>
    <ligand>
        <name>Fe cation</name>
        <dbReference type="ChEBI" id="CHEBI:24875"/>
    </ligand>
</feature>
<feature type="binding site" evidence="4">
    <location>
        <position position="251"/>
    </location>
    <ligand>
        <name>Fe cation</name>
        <dbReference type="ChEBI" id="CHEBI:24875"/>
    </ligand>
</feature>
<feature type="binding site" evidence="4">
    <location>
        <position position="305"/>
    </location>
    <ligand>
        <name>Fe cation</name>
        <dbReference type="ChEBI" id="CHEBI:24875"/>
    </ligand>
</feature>
<proteinExistence type="evidence at transcript level"/>
<accession>Q4PT02</accession>
<accession>Q9C6Y1</accession>
<accession>Q9LNY5</accession>
<dbReference type="EC" id="1.14.11.-" evidence="2"/>
<dbReference type="EMBL" id="AC022314">
    <property type="protein sequence ID" value="AAF79672.1"/>
    <property type="status" value="ALT_INIT"/>
    <property type="molecule type" value="Genomic_DNA"/>
</dbReference>
<dbReference type="EMBL" id="AC074228">
    <property type="protein sequence ID" value="AAG50546.1"/>
    <property type="status" value="ALT_INIT"/>
    <property type="molecule type" value="Genomic_DNA"/>
</dbReference>
<dbReference type="EMBL" id="CP002684">
    <property type="protein sequence ID" value="AEE32018.1"/>
    <property type="molecule type" value="Genomic_DNA"/>
</dbReference>
<dbReference type="EMBL" id="DQ056484">
    <property type="protein sequence ID" value="AAY78641.1"/>
    <property type="molecule type" value="mRNA"/>
</dbReference>
<dbReference type="PIR" id="B96505">
    <property type="entry name" value="B96505"/>
</dbReference>
<dbReference type="RefSeq" id="NP_175075.1">
    <property type="nucleotide sequence ID" value="NM_103535.2"/>
</dbReference>
<dbReference type="SMR" id="Q4PT02"/>
<dbReference type="FunCoup" id="Q4PT02">
    <property type="interactions" value="20"/>
</dbReference>
<dbReference type="STRING" id="3702.Q4PT02"/>
<dbReference type="PaxDb" id="3702-AT1G44090.1"/>
<dbReference type="EnsemblPlants" id="AT1G44090.1">
    <property type="protein sequence ID" value="AT1G44090.1"/>
    <property type="gene ID" value="AT1G44090"/>
</dbReference>
<dbReference type="GeneID" id="841012"/>
<dbReference type="Gramene" id="AT1G44090.1">
    <property type="protein sequence ID" value="AT1G44090.1"/>
    <property type="gene ID" value="AT1G44090"/>
</dbReference>
<dbReference type="KEGG" id="ath:AT1G44090"/>
<dbReference type="Araport" id="AT1G44090"/>
<dbReference type="TAIR" id="AT1G44090">
    <property type="gene designation" value="GA20OX5"/>
</dbReference>
<dbReference type="eggNOG" id="KOG0143">
    <property type="taxonomic scope" value="Eukaryota"/>
</dbReference>
<dbReference type="HOGENOM" id="CLU_010119_16_3_1"/>
<dbReference type="InParanoid" id="Q4PT02"/>
<dbReference type="OMA" id="FCDAMNG"/>
<dbReference type="PhylomeDB" id="Q4PT02"/>
<dbReference type="UniPathway" id="UPA00390"/>
<dbReference type="PRO" id="PR:Q4PT02"/>
<dbReference type="Proteomes" id="UP000006548">
    <property type="component" value="Chromosome 1"/>
</dbReference>
<dbReference type="ExpressionAtlas" id="Q4PT02">
    <property type="expression patterns" value="baseline and differential"/>
</dbReference>
<dbReference type="GO" id="GO:0045544">
    <property type="term" value="F:gibberellin 20-oxidase activity"/>
    <property type="evidence" value="ECO:0000304"/>
    <property type="project" value="TAIR"/>
</dbReference>
<dbReference type="GO" id="GO:0046872">
    <property type="term" value="F:metal ion binding"/>
    <property type="evidence" value="ECO:0007669"/>
    <property type="project" value="UniProtKB-KW"/>
</dbReference>
<dbReference type="GO" id="GO:0009686">
    <property type="term" value="P:gibberellin biosynthetic process"/>
    <property type="evidence" value="ECO:0000304"/>
    <property type="project" value="TAIR"/>
</dbReference>
<dbReference type="FunFam" id="2.60.120.330:FF:000090">
    <property type="entry name" value="Gibberellin 20 oxidase 5"/>
    <property type="match status" value="1"/>
</dbReference>
<dbReference type="Gene3D" id="2.60.120.330">
    <property type="entry name" value="B-lactam Antibiotic, Isopenicillin N Synthase, Chain"/>
    <property type="match status" value="1"/>
</dbReference>
<dbReference type="InterPro" id="IPR026992">
    <property type="entry name" value="DIOX_N"/>
</dbReference>
<dbReference type="InterPro" id="IPR044861">
    <property type="entry name" value="IPNS-like_FE2OG_OXY"/>
</dbReference>
<dbReference type="InterPro" id="IPR027443">
    <property type="entry name" value="IPNS-like_sf"/>
</dbReference>
<dbReference type="InterPro" id="IPR050231">
    <property type="entry name" value="Iron_ascorbate_oxido_reductase"/>
</dbReference>
<dbReference type="InterPro" id="IPR005123">
    <property type="entry name" value="Oxoglu/Fe-dep_dioxygenase_dom"/>
</dbReference>
<dbReference type="PANTHER" id="PTHR47990">
    <property type="entry name" value="2-OXOGLUTARATE (2OG) AND FE(II)-DEPENDENT OXYGENASE SUPERFAMILY PROTEIN-RELATED"/>
    <property type="match status" value="1"/>
</dbReference>
<dbReference type="Pfam" id="PF03171">
    <property type="entry name" value="2OG-FeII_Oxy"/>
    <property type="match status" value="1"/>
</dbReference>
<dbReference type="Pfam" id="PF14226">
    <property type="entry name" value="DIOX_N"/>
    <property type="match status" value="1"/>
</dbReference>
<dbReference type="PRINTS" id="PR00682">
    <property type="entry name" value="IPNSYNTHASE"/>
</dbReference>
<dbReference type="SUPFAM" id="SSF51197">
    <property type="entry name" value="Clavaminate synthase-like"/>
    <property type="match status" value="1"/>
</dbReference>
<dbReference type="PROSITE" id="PS51471">
    <property type="entry name" value="FE2OG_OXY"/>
    <property type="match status" value="1"/>
</dbReference>
<sequence length="385" mass="43161">MCIYASRQTVCPYLTPFKVKRPKSREMNSSDVNFSLLQSQPNVPAEFFWPEKDVAPSEGDLDLPIIDLSGFLNGNEAETQLAAKAVKKACMAHGTFLVVNHGFKSGLAEKALEISSLFFGLSKDEKLRAYRIPGNISGYTAGHSQRFSSNLPWNETLTLAFKKGPPHVVEDFLTSRLGNHRQEIGQVFQEFCDAMNGLVMDLMELLGISMGLKDRTYYRRFFEDGSGIFRCNYYPPCKQPEKALGVGPHNDPTAITVLLQDDVVGLEVFAAGSWQTVRPRPGALVVNVGDTFMALSNGNYRSCYHRAVVNKEKVRRSLVFFSCPREDKIIVPPPELVEGEEASRKYPDFTWAQLQKFTQSGYRVDNTTLHNFSSWLVSNSDKKST</sequence>
<keyword id="KW-0408">Iron</keyword>
<keyword id="KW-0479">Metal-binding</keyword>
<keyword id="KW-0560">Oxidoreductase</keyword>
<keyword id="KW-1185">Reference proteome</keyword>
<protein>
    <recommendedName>
        <fullName>Gibberellin 20 oxidase 5</fullName>
        <ecNumber evidence="2">1.14.11.-</ecNumber>
    </recommendedName>
    <alternativeName>
        <fullName>GA 20-oxidase 5</fullName>
    </alternativeName>
    <alternativeName>
        <fullName>Gibberellin C-20 oxidase 5</fullName>
    </alternativeName>
</protein>
<comment type="function">
    <text evidence="1">Key oxidase enzyme in the biosynthesis of gibberellin that catalyzes the conversion of GA12 and GA53 to GA9 and GA20 respectively, via a three-step oxidation at C-20 of the GA skeleton.</text>
</comment>
<comment type="catalytic activity">
    <reaction evidence="2">
        <text>gibberellin A12 + 2 2-oxoglutarate + 3 O2 + H(+) = gibberellin A9 + 2 succinate + 3 CO2 + 2 H2O</text>
        <dbReference type="Rhea" id="RHEA:60772"/>
        <dbReference type="ChEBI" id="CHEBI:15377"/>
        <dbReference type="ChEBI" id="CHEBI:15378"/>
        <dbReference type="ChEBI" id="CHEBI:15379"/>
        <dbReference type="ChEBI" id="CHEBI:16526"/>
        <dbReference type="ChEBI" id="CHEBI:16810"/>
        <dbReference type="ChEBI" id="CHEBI:30031"/>
        <dbReference type="ChEBI" id="CHEBI:58627"/>
        <dbReference type="ChEBI" id="CHEBI:73255"/>
    </reaction>
    <physiologicalReaction direction="left-to-right" evidence="2">
        <dbReference type="Rhea" id="RHEA:60773"/>
    </physiologicalReaction>
</comment>
<comment type="catalytic activity">
    <reaction evidence="2">
        <text>gibberellin A53 + 2 2-oxoglutarate + 3 O2 + H(+) = gibberellin A20 + 2 succinate + 3 CO2 + 2 H2O</text>
        <dbReference type="Rhea" id="RHEA:60796"/>
        <dbReference type="ChEBI" id="CHEBI:15377"/>
        <dbReference type="ChEBI" id="CHEBI:15378"/>
        <dbReference type="ChEBI" id="CHEBI:15379"/>
        <dbReference type="ChEBI" id="CHEBI:16526"/>
        <dbReference type="ChEBI" id="CHEBI:16810"/>
        <dbReference type="ChEBI" id="CHEBI:30031"/>
        <dbReference type="ChEBI" id="CHEBI:58526"/>
        <dbReference type="ChEBI" id="CHEBI:143954"/>
    </reaction>
    <physiologicalReaction direction="left-to-right" evidence="2">
        <dbReference type="Rhea" id="RHEA:60797"/>
    </physiologicalReaction>
</comment>
<comment type="cofactor">
    <cofactor evidence="4">
        <name>Fe(2+)</name>
        <dbReference type="ChEBI" id="CHEBI:29033"/>
    </cofactor>
    <text evidence="4">Binds 1 Fe(2+) ion per subunit.</text>
</comment>
<comment type="cofactor">
    <cofactor evidence="1">
        <name>L-ascorbate</name>
        <dbReference type="ChEBI" id="CHEBI:38290"/>
    </cofactor>
</comment>
<comment type="pathway">
    <text>Plant hormone biosynthesis; gibberellin biosynthesis.</text>
</comment>
<comment type="tissue specificity">
    <text evidence="5">Expressed in 3-day-old seedlings and siliques. Detected in dry seeds, roots, old leaves and inflorescences.</text>
</comment>
<comment type="induction">
    <text evidence="5">Not controlled by the level of physiologically active gibberellin.</text>
</comment>
<comment type="similarity">
    <text evidence="6">Belongs to the iron/ascorbate-dependent oxidoreductase family. GA20OX subfamily.</text>
</comment>
<comment type="sequence caution" evidence="6">
    <conflict type="erroneous initiation">
        <sequence resource="EMBL-CDS" id="AAF79672"/>
    </conflict>
    <text>Truncated N-terminus.</text>
</comment>
<comment type="sequence caution" evidence="6">
    <conflict type="erroneous initiation">
        <sequence resource="EMBL-CDS" id="AAG50546"/>
    </conflict>
    <text>Truncated N-terminus.</text>
</comment>
<organism>
    <name type="scientific">Arabidopsis thaliana</name>
    <name type="common">Mouse-ear cress</name>
    <dbReference type="NCBI Taxonomy" id="3702"/>
    <lineage>
        <taxon>Eukaryota</taxon>
        <taxon>Viridiplantae</taxon>
        <taxon>Streptophyta</taxon>
        <taxon>Embryophyta</taxon>
        <taxon>Tracheophyta</taxon>
        <taxon>Spermatophyta</taxon>
        <taxon>Magnoliopsida</taxon>
        <taxon>eudicotyledons</taxon>
        <taxon>Gunneridae</taxon>
        <taxon>Pentapetalae</taxon>
        <taxon>rosids</taxon>
        <taxon>malvids</taxon>
        <taxon>Brassicales</taxon>
        <taxon>Brassicaceae</taxon>
        <taxon>Camelineae</taxon>
        <taxon>Arabidopsis</taxon>
    </lineage>
</organism>
<evidence type="ECO:0000250" key="1"/>
<evidence type="ECO:0000250" key="2">
    <source>
        <dbReference type="UniProtKB" id="O04705"/>
    </source>
</evidence>
<evidence type="ECO:0000255" key="3"/>
<evidence type="ECO:0000255" key="4">
    <source>
        <dbReference type="PROSITE-ProRule" id="PRU00805"/>
    </source>
</evidence>
<evidence type="ECO:0000269" key="5">
    <source>
    </source>
</evidence>
<evidence type="ECO:0000305" key="6"/>
<gene>
    <name type="primary">GA20OX5</name>
    <name type="ordered locus">At1g44090</name>
    <name type="ORF">F9C16.33</name>
    <name type="ORF">T7O23.20</name>
</gene>
<name>GAOX5_ARATH</name>
<reference key="1">
    <citation type="journal article" date="2000" name="Nature">
        <title>Sequence and analysis of chromosome 1 of the plant Arabidopsis thaliana.</title>
        <authorList>
            <person name="Theologis A."/>
            <person name="Ecker J.R."/>
            <person name="Palm C.J."/>
            <person name="Federspiel N.A."/>
            <person name="Kaul S."/>
            <person name="White O."/>
            <person name="Alonso J."/>
            <person name="Altafi H."/>
            <person name="Araujo R."/>
            <person name="Bowman C.L."/>
            <person name="Brooks S.Y."/>
            <person name="Buehler E."/>
            <person name="Chan A."/>
            <person name="Chao Q."/>
            <person name="Chen H."/>
            <person name="Cheuk R.F."/>
            <person name="Chin C.W."/>
            <person name="Chung M.K."/>
            <person name="Conn L."/>
            <person name="Conway A.B."/>
            <person name="Conway A.R."/>
            <person name="Creasy T.H."/>
            <person name="Dewar K."/>
            <person name="Dunn P."/>
            <person name="Etgu P."/>
            <person name="Feldblyum T.V."/>
            <person name="Feng J.-D."/>
            <person name="Fong B."/>
            <person name="Fujii C.Y."/>
            <person name="Gill J.E."/>
            <person name="Goldsmith A.D."/>
            <person name="Haas B."/>
            <person name="Hansen N.F."/>
            <person name="Hughes B."/>
            <person name="Huizar L."/>
            <person name="Hunter J.L."/>
            <person name="Jenkins J."/>
            <person name="Johnson-Hopson C."/>
            <person name="Khan S."/>
            <person name="Khaykin E."/>
            <person name="Kim C.J."/>
            <person name="Koo H.L."/>
            <person name="Kremenetskaia I."/>
            <person name="Kurtz D.B."/>
            <person name="Kwan A."/>
            <person name="Lam B."/>
            <person name="Langin-Hooper S."/>
            <person name="Lee A."/>
            <person name="Lee J.M."/>
            <person name="Lenz C.A."/>
            <person name="Li J.H."/>
            <person name="Li Y.-P."/>
            <person name="Lin X."/>
            <person name="Liu S.X."/>
            <person name="Liu Z.A."/>
            <person name="Luros J.S."/>
            <person name="Maiti R."/>
            <person name="Marziali A."/>
            <person name="Militscher J."/>
            <person name="Miranda M."/>
            <person name="Nguyen M."/>
            <person name="Nierman W.C."/>
            <person name="Osborne B.I."/>
            <person name="Pai G."/>
            <person name="Peterson J."/>
            <person name="Pham P.K."/>
            <person name="Rizzo M."/>
            <person name="Rooney T."/>
            <person name="Rowley D."/>
            <person name="Sakano H."/>
            <person name="Salzberg S.L."/>
            <person name="Schwartz J.R."/>
            <person name="Shinn P."/>
            <person name="Southwick A.M."/>
            <person name="Sun H."/>
            <person name="Tallon L.J."/>
            <person name="Tambunga G."/>
            <person name="Toriumi M.J."/>
            <person name="Town C.D."/>
            <person name="Utterback T."/>
            <person name="Van Aken S."/>
            <person name="Vaysberg M."/>
            <person name="Vysotskaia V.S."/>
            <person name="Walker M."/>
            <person name="Wu D."/>
            <person name="Yu G."/>
            <person name="Fraser C.M."/>
            <person name="Venter J.C."/>
            <person name="Davis R.W."/>
        </authorList>
    </citation>
    <scope>NUCLEOTIDE SEQUENCE [LARGE SCALE GENOMIC DNA]</scope>
    <source>
        <strain>cv. Columbia</strain>
    </source>
</reference>
<reference key="2">
    <citation type="journal article" date="2017" name="Plant J.">
        <title>Araport11: a complete reannotation of the Arabidopsis thaliana reference genome.</title>
        <authorList>
            <person name="Cheng C.Y."/>
            <person name="Krishnakumar V."/>
            <person name="Chan A.P."/>
            <person name="Thibaud-Nissen F."/>
            <person name="Schobel S."/>
            <person name="Town C.D."/>
        </authorList>
    </citation>
    <scope>GENOME REANNOTATION</scope>
    <source>
        <strain>cv. Columbia</strain>
    </source>
</reference>
<reference key="3">
    <citation type="submission" date="2005-05" db="EMBL/GenBank/DDBJ databases">
        <authorList>
            <person name="Underwood B.A."/>
            <person name="Xiao Y.-L."/>
            <person name="Moskal W.A. Jr."/>
            <person name="Monaghan E.L."/>
            <person name="Wang W."/>
            <person name="Redman J.C."/>
            <person name="Wu H.C."/>
            <person name="Utterback T."/>
            <person name="Town C.D."/>
        </authorList>
    </citation>
    <scope>NUCLEOTIDE SEQUENCE [LARGE SCALE MRNA]</scope>
    <source>
        <strain>cv. Columbia</strain>
    </source>
</reference>
<reference key="4">
    <citation type="journal article" date="2008" name="Plant J.">
        <title>The gibberellin biosynthetic genes AtGA20ox1 and AtGA20ox2 act, partially redundantly, to promote growth and development throughout the Arabidopsis life cycle.</title>
        <authorList>
            <person name="Rieu I."/>
            <person name="Ruiz-Rivero O."/>
            <person name="Fernandez-Garcia N."/>
            <person name="Griffiths J."/>
            <person name="Powers S.J."/>
            <person name="Gong F."/>
            <person name="Linhartova T."/>
            <person name="Eriksson S."/>
            <person name="Nilsson O."/>
            <person name="Thomas S.G."/>
            <person name="Phillips A.L."/>
            <person name="Hedden P."/>
        </authorList>
    </citation>
    <scope>TISSUE SPECIFICITY</scope>
    <scope>INDUCTION BY GIBBERELLIN</scope>
    <source>
        <strain>cv. Columbia</strain>
    </source>
</reference>
<reference key="5">
    <citation type="journal article" date="2011" name="Gene">
        <title>Evolutionary analysis of three gibberellin oxidase genes in rice, Arabidopsis, and soybean.</title>
        <authorList>
            <person name="Han F."/>
            <person name="Zhu B."/>
        </authorList>
    </citation>
    <scope>GENE FAMILY</scope>
</reference>